<comment type="function">
    <text>Tubulin is the major constituent of microtubules, a cylinder consisting of laterally associated linear protofilaments composed of alpha- and beta-tubulin heterodimers. Microtubules grow by the addition of GTP-tubulin dimers to the microtubule end, where a stabilizing cap forms. Below the cap, tubulin dimers are in GDP-bound state, owing to GTPase activity of alpha-tubulin.</text>
</comment>
<comment type="cofactor">
    <cofactor evidence="1">
        <name>Mg(2+)</name>
        <dbReference type="ChEBI" id="CHEBI:18420"/>
    </cofactor>
</comment>
<comment type="subunit">
    <text>Dimer of alpha and beta chains. A typical microtubule is a hollow water-filled tube with an outer diameter of 25 nm and an inner diameter of 15 nM. Alpha-beta heterodimers associate head-to-tail to form protofilaments running lengthwise along the microtubule wall with the beta-tubulin subunit facing the microtubule plus end conferring a structural polarity. Microtubules usually have 13 protofilaments but different protofilament numbers can be found in some organisms and specialized cells.</text>
</comment>
<comment type="subcellular location">
    <subcellularLocation>
        <location>Cytoplasm</location>
        <location>Cytoskeleton</location>
    </subcellularLocation>
</comment>
<comment type="similarity">
    <text evidence="4">Belongs to the tubulin family.</text>
</comment>
<dbReference type="EMBL" id="Z67991">
    <property type="protein sequence ID" value="CAA91939.1"/>
    <property type="molecule type" value="Genomic_DNA"/>
</dbReference>
<dbReference type="SMR" id="P50259"/>
<dbReference type="GO" id="GO:0005737">
    <property type="term" value="C:cytoplasm"/>
    <property type="evidence" value="ECO:0007669"/>
    <property type="project" value="UniProtKB-KW"/>
</dbReference>
<dbReference type="GO" id="GO:0005874">
    <property type="term" value="C:microtubule"/>
    <property type="evidence" value="ECO:0007669"/>
    <property type="project" value="UniProtKB-KW"/>
</dbReference>
<dbReference type="GO" id="GO:0005525">
    <property type="term" value="F:GTP binding"/>
    <property type="evidence" value="ECO:0007669"/>
    <property type="project" value="UniProtKB-KW"/>
</dbReference>
<dbReference type="GO" id="GO:0003924">
    <property type="term" value="F:GTPase activity"/>
    <property type="evidence" value="ECO:0007669"/>
    <property type="project" value="InterPro"/>
</dbReference>
<dbReference type="GO" id="GO:0046872">
    <property type="term" value="F:metal ion binding"/>
    <property type="evidence" value="ECO:0007669"/>
    <property type="project" value="UniProtKB-KW"/>
</dbReference>
<dbReference type="GO" id="GO:0005200">
    <property type="term" value="F:structural constituent of cytoskeleton"/>
    <property type="evidence" value="ECO:0007669"/>
    <property type="project" value="InterPro"/>
</dbReference>
<dbReference type="GO" id="GO:0007017">
    <property type="term" value="P:microtubule-based process"/>
    <property type="evidence" value="ECO:0007669"/>
    <property type="project" value="InterPro"/>
</dbReference>
<dbReference type="CDD" id="cd02187">
    <property type="entry name" value="beta_tubulin"/>
    <property type="match status" value="1"/>
</dbReference>
<dbReference type="FunFam" id="1.10.287.600:FF:000013">
    <property type="entry name" value="Tubulin beta chain"/>
    <property type="match status" value="1"/>
</dbReference>
<dbReference type="FunFam" id="3.30.1330.20:FF:000009">
    <property type="entry name" value="Tubulin beta chain"/>
    <property type="match status" value="1"/>
</dbReference>
<dbReference type="FunFam" id="3.40.50.1440:FF:000006">
    <property type="entry name" value="Tubulin beta chain"/>
    <property type="match status" value="1"/>
</dbReference>
<dbReference type="Gene3D" id="1.10.287.600">
    <property type="entry name" value="Helix hairpin bin"/>
    <property type="match status" value="1"/>
</dbReference>
<dbReference type="Gene3D" id="3.30.1330.20">
    <property type="entry name" value="Tubulin/FtsZ, C-terminal domain"/>
    <property type="match status" value="1"/>
</dbReference>
<dbReference type="Gene3D" id="3.40.50.1440">
    <property type="entry name" value="Tubulin/FtsZ, GTPase domain"/>
    <property type="match status" value="1"/>
</dbReference>
<dbReference type="InterPro" id="IPR013838">
    <property type="entry name" value="Beta-tubulin_BS"/>
</dbReference>
<dbReference type="InterPro" id="IPR002453">
    <property type="entry name" value="Beta_tubulin"/>
</dbReference>
<dbReference type="InterPro" id="IPR008280">
    <property type="entry name" value="Tub_FtsZ_C"/>
</dbReference>
<dbReference type="InterPro" id="IPR000217">
    <property type="entry name" value="Tubulin"/>
</dbReference>
<dbReference type="InterPro" id="IPR037103">
    <property type="entry name" value="Tubulin/FtsZ-like_C"/>
</dbReference>
<dbReference type="InterPro" id="IPR018316">
    <property type="entry name" value="Tubulin/FtsZ_2-layer-sand-dom"/>
</dbReference>
<dbReference type="InterPro" id="IPR036525">
    <property type="entry name" value="Tubulin/FtsZ_GTPase_sf"/>
</dbReference>
<dbReference type="InterPro" id="IPR023123">
    <property type="entry name" value="Tubulin_C"/>
</dbReference>
<dbReference type="InterPro" id="IPR017975">
    <property type="entry name" value="Tubulin_CS"/>
</dbReference>
<dbReference type="InterPro" id="IPR003008">
    <property type="entry name" value="Tubulin_FtsZ_GTPase"/>
</dbReference>
<dbReference type="PANTHER" id="PTHR11588">
    <property type="entry name" value="TUBULIN"/>
    <property type="match status" value="1"/>
</dbReference>
<dbReference type="Pfam" id="PF00091">
    <property type="entry name" value="Tubulin"/>
    <property type="match status" value="1"/>
</dbReference>
<dbReference type="Pfam" id="PF03953">
    <property type="entry name" value="Tubulin_C"/>
    <property type="match status" value="1"/>
</dbReference>
<dbReference type="PRINTS" id="PR01163">
    <property type="entry name" value="BETATUBULIN"/>
</dbReference>
<dbReference type="PRINTS" id="PR01161">
    <property type="entry name" value="TUBULIN"/>
</dbReference>
<dbReference type="SMART" id="SM00864">
    <property type="entry name" value="Tubulin"/>
    <property type="match status" value="1"/>
</dbReference>
<dbReference type="SMART" id="SM00865">
    <property type="entry name" value="Tubulin_C"/>
    <property type="match status" value="1"/>
</dbReference>
<dbReference type="SUPFAM" id="SSF55307">
    <property type="entry name" value="Tubulin C-terminal domain-like"/>
    <property type="match status" value="1"/>
</dbReference>
<dbReference type="SUPFAM" id="SSF52490">
    <property type="entry name" value="Tubulin nucleotide-binding domain-like"/>
    <property type="match status" value="1"/>
</dbReference>
<dbReference type="PROSITE" id="PS00227">
    <property type="entry name" value="TUBULIN"/>
    <property type="match status" value="1"/>
</dbReference>
<dbReference type="PROSITE" id="PS00228">
    <property type="entry name" value="TUBULIN_B_AUTOREG"/>
    <property type="match status" value="1"/>
</dbReference>
<keyword id="KW-0963">Cytoplasm</keyword>
<keyword id="KW-0206">Cytoskeleton</keyword>
<keyword id="KW-0342">GTP-binding</keyword>
<keyword id="KW-0460">Magnesium</keyword>
<keyword id="KW-0479">Metal-binding</keyword>
<keyword id="KW-0493">Microtubule</keyword>
<keyword id="KW-0547">Nucleotide-binding</keyword>
<feature type="chain" id="PRO_0000048375" description="Tubulin beta chain">
    <location>
        <begin position="1"/>
        <end position="457"/>
    </location>
</feature>
<feature type="region of interest" description="Disordered" evidence="3">
    <location>
        <begin position="431"/>
        <end position="457"/>
    </location>
</feature>
<feature type="binding site" evidence="2">
    <location>
        <position position="11"/>
    </location>
    <ligand>
        <name>GTP</name>
        <dbReference type="ChEBI" id="CHEBI:37565"/>
    </ligand>
</feature>
<feature type="binding site" evidence="1">
    <location>
        <position position="69"/>
    </location>
    <ligand>
        <name>GTP</name>
        <dbReference type="ChEBI" id="CHEBI:37565"/>
    </ligand>
</feature>
<feature type="binding site" evidence="1">
    <location>
        <position position="69"/>
    </location>
    <ligand>
        <name>Mg(2+)</name>
        <dbReference type="ChEBI" id="CHEBI:18420"/>
    </ligand>
</feature>
<feature type="binding site" evidence="2">
    <location>
        <position position="138"/>
    </location>
    <ligand>
        <name>GTP</name>
        <dbReference type="ChEBI" id="CHEBI:37565"/>
    </ligand>
</feature>
<feature type="binding site" evidence="2">
    <location>
        <position position="142"/>
    </location>
    <ligand>
        <name>GTP</name>
        <dbReference type="ChEBI" id="CHEBI:37565"/>
    </ligand>
</feature>
<feature type="binding site" evidence="2">
    <location>
        <position position="143"/>
    </location>
    <ligand>
        <name>GTP</name>
        <dbReference type="ChEBI" id="CHEBI:37565"/>
    </ligand>
</feature>
<feature type="binding site" evidence="2">
    <location>
        <position position="144"/>
    </location>
    <ligand>
        <name>GTP</name>
        <dbReference type="ChEBI" id="CHEBI:37565"/>
    </ligand>
</feature>
<feature type="binding site" evidence="2">
    <location>
        <position position="204"/>
    </location>
    <ligand>
        <name>GTP</name>
        <dbReference type="ChEBI" id="CHEBI:37565"/>
    </ligand>
</feature>
<feature type="binding site" evidence="2">
    <location>
        <position position="226"/>
    </location>
    <ligand>
        <name>GTP</name>
        <dbReference type="ChEBI" id="CHEBI:37565"/>
    </ligand>
</feature>
<proteinExistence type="inferred from homology"/>
<gene>
    <name type="primary">TUBB1</name>
</gene>
<accession>P50259</accession>
<organism>
    <name type="scientific">Porphyra purpurea</name>
    <name type="common">Red seaweed</name>
    <name type="synonym">Ulva purpurea</name>
    <dbReference type="NCBI Taxonomy" id="2787"/>
    <lineage>
        <taxon>Eukaryota</taxon>
        <taxon>Rhodophyta</taxon>
        <taxon>Bangiophyceae</taxon>
        <taxon>Bangiales</taxon>
        <taxon>Bangiaceae</taxon>
        <taxon>Porphyra</taxon>
    </lineage>
</organism>
<reference key="1">
    <citation type="submission" date="1995-11" db="EMBL/GenBank/DDBJ databases">
        <title>Expression of beta-tubulin genes in the sporophyte and gametophyte of the red alga Porphyra purpurea.</title>
        <authorList>
            <person name="Mackay R.M."/>
            <person name="Gallant J.W."/>
        </authorList>
    </citation>
    <scope>NUCLEOTIDE SEQUENCE [GENOMIC DNA]</scope>
    <source>
        <strain>Avonport</strain>
    </source>
</reference>
<protein>
    <recommendedName>
        <fullName>Tubulin beta chain</fullName>
    </recommendedName>
    <alternativeName>
        <fullName>Beta-tubulin</fullName>
    </alternativeName>
</protein>
<evidence type="ECO:0000250" key="1">
    <source>
        <dbReference type="UniProtKB" id="P68363"/>
    </source>
</evidence>
<evidence type="ECO:0000250" key="2">
    <source>
        <dbReference type="UniProtKB" id="Q13509"/>
    </source>
</evidence>
<evidence type="ECO:0000256" key="3">
    <source>
        <dbReference type="SAM" id="MobiDB-lite"/>
    </source>
</evidence>
<evidence type="ECO:0000305" key="4"/>
<sequence>MREIVHIQAGQCGNQIGAKFWEVISEEHGIDSSGAYNGTSDLQLDRAEVYYNEGSGGRYVPRAVLVDLEPGVLDTIKAGPHGGLYRPDNFVAGQSGAGNNWAKGHYTEGAELVDSVLDVVRREAEGCDCLQGFQVTHSLGGGTGSGMGTLLVSKIREEFPDRMMCTYSVMPSPKVSDTVVEPYNCTLSVHQLVENADAVFCIDNEALYNICYNTLKKPEPAYPDLNKLVSGVMSGITSSLRFPGQLNSDLRKLAVNLVPFPRLHFFMIGYAPLSADGVTAYRAKTVADLTKQMFDPKNMMADCDPRNGRYLTASAYFRGHVSTKEVEEQMDAIQTKNSGQFIDWIPNAIKASVCDVAPTGETMSAAFIGNSTAIQDIFKRVGSHFSAMFKRKAFLHWYTGEGMDEMEFTEAESNMNDLVSELQQYEAATVEGEEEEDAYAEGAVVNGDQSYEDQYAA</sequence>
<name>TBB_PORPU</name>